<gene>
    <name type="ordered locus">TP_0169</name>
</gene>
<proteinExistence type="predicted"/>
<accession>O83199</accession>
<sequence length="32" mass="3616">MWSGLFPDLQGTAFFRAWVASARFRVFHGEGA</sequence>
<keyword id="KW-1185">Reference proteome</keyword>
<organism>
    <name type="scientific">Treponema pallidum (strain Nichols)</name>
    <dbReference type="NCBI Taxonomy" id="243276"/>
    <lineage>
        <taxon>Bacteria</taxon>
        <taxon>Pseudomonadati</taxon>
        <taxon>Spirochaetota</taxon>
        <taxon>Spirochaetia</taxon>
        <taxon>Spirochaetales</taxon>
        <taxon>Treponemataceae</taxon>
        <taxon>Treponema</taxon>
    </lineage>
</organism>
<name>Y169_TREPA</name>
<reference key="1">
    <citation type="journal article" date="1998" name="Science">
        <title>Complete genome sequence of Treponema pallidum, the syphilis spirochete.</title>
        <authorList>
            <person name="Fraser C.M."/>
            <person name="Norris S.J."/>
            <person name="Weinstock G.M."/>
            <person name="White O."/>
            <person name="Sutton G.G."/>
            <person name="Dodson R.J."/>
            <person name="Gwinn M.L."/>
            <person name="Hickey E.K."/>
            <person name="Clayton R.A."/>
            <person name="Ketchum K.A."/>
            <person name="Sodergren E."/>
            <person name="Hardham J.M."/>
            <person name="McLeod M.P."/>
            <person name="Salzberg S.L."/>
            <person name="Peterson J.D."/>
            <person name="Khalak H.G."/>
            <person name="Richardson D.L."/>
            <person name="Howell J.K."/>
            <person name="Chidambaram M."/>
            <person name="Utterback T.R."/>
            <person name="McDonald L.A."/>
            <person name="Artiach P."/>
            <person name="Bowman C."/>
            <person name="Cotton M.D."/>
            <person name="Fujii C."/>
            <person name="Garland S.A."/>
            <person name="Hatch B."/>
            <person name="Horst K."/>
            <person name="Roberts K.M."/>
            <person name="Sandusky M."/>
            <person name="Weidman J.F."/>
            <person name="Smith H.O."/>
            <person name="Venter J.C."/>
        </authorList>
    </citation>
    <scope>NUCLEOTIDE SEQUENCE [LARGE SCALE GENOMIC DNA]</scope>
    <source>
        <strain>Nichols</strain>
    </source>
</reference>
<dbReference type="EMBL" id="AE000520">
    <property type="protein sequence ID" value="AAC65161.1"/>
    <property type="molecule type" value="Genomic_DNA"/>
</dbReference>
<dbReference type="PIR" id="F71357">
    <property type="entry name" value="F71357"/>
</dbReference>
<dbReference type="STRING" id="243276.TP_0169"/>
<dbReference type="EnsemblBacteria" id="AAC65161">
    <property type="protein sequence ID" value="AAC65161"/>
    <property type="gene ID" value="TP_0169"/>
</dbReference>
<dbReference type="KEGG" id="tpa:TP_0169"/>
<dbReference type="HOGENOM" id="CLU_3391919_0_0_12"/>
<dbReference type="Proteomes" id="UP000000811">
    <property type="component" value="Chromosome"/>
</dbReference>
<protein>
    <recommendedName>
        <fullName>Uncharacterized protein TP_0169</fullName>
    </recommendedName>
</protein>
<feature type="chain" id="PRO_0000202203" description="Uncharacterized protein TP_0169">
    <location>
        <begin position="1"/>
        <end position="32"/>
    </location>
</feature>